<comment type="function">
    <text evidence="1">Envelope glycoprotein necessary for proper maturation of gM and modulation of its membrane fusion activity. Also plays a critical role in virion morphogenesis.</text>
</comment>
<comment type="subunit">
    <text evidence="1">Interacts (via N-terminus) with gM (via N-terminus). The gM-gN heterodimer forms the gCII complex.</text>
</comment>
<comment type="subcellular location">
    <subcellularLocation>
        <location evidence="1">Virion membrane</location>
        <topology evidence="1">Single-pass type I membrane protein</topology>
    </subcellularLocation>
    <subcellularLocation>
        <location evidence="1">Host membrane</location>
        <topology evidence="1">Single-pass type I membrane protein</topology>
    </subcellularLocation>
    <subcellularLocation>
        <location evidence="1">Host Golgi apparatus</location>
        <location evidence="1">Host trans-Golgi network</location>
    </subcellularLocation>
    <text evidence="1">When coexpressed with gM, localizes in the host trans-Golgi network.</text>
</comment>
<comment type="similarity">
    <text evidence="1">Belongs to the herpesviridae glycoprotein N family.</text>
</comment>
<keyword id="KW-1015">Disulfide bond</keyword>
<keyword id="KW-1040">Host Golgi apparatus</keyword>
<keyword id="KW-1043">Host membrane</keyword>
<keyword id="KW-0472">Membrane</keyword>
<keyword id="KW-1185">Reference proteome</keyword>
<keyword id="KW-0732">Signal</keyword>
<keyword id="KW-0812">Transmembrane</keyword>
<keyword id="KW-1133">Transmembrane helix</keyword>
<keyword id="KW-0261">Viral envelope protein</keyword>
<keyword id="KW-0946">Virion</keyword>
<accession>Q77MR4</accession>
<sequence length="95" mass="10160">MGLMDIHNAVCSLVIGVAILIATSQATFVDWGSSITSMGDFWESTCSAVGVSIAFSSGFSVLFYMGLVAVISALLAGSYHACFRLFTADMFKEEW</sequence>
<organismHost>
    <name type="scientific">Gallus gallus</name>
    <name type="common">Chicken</name>
    <dbReference type="NCBI Taxonomy" id="9031"/>
</organismHost>
<proteinExistence type="inferred from homology"/>
<organism>
    <name type="scientific">Gallid herpesvirus 2 (strain Chicken/Md5/ATCC VR-987)</name>
    <name type="common">GaHV-2</name>
    <name type="synonym">Marek's disease herpesvirus type 1</name>
    <dbReference type="NCBI Taxonomy" id="10389"/>
    <lineage>
        <taxon>Viruses</taxon>
        <taxon>Duplodnaviria</taxon>
        <taxon>Heunggongvirae</taxon>
        <taxon>Peploviricota</taxon>
        <taxon>Herviviricetes</taxon>
        <taxon>Herpesvirales</taxon>
        <taxon>Orthoherpesviridae</taxon>
        <taxon>Alphaherpesvirinae</taxon>
        <taxon>Mardivirus</taxon>
        <taxon>Mardivirus gallidalpha2</taxon>
        <taxon>Gallid alphaherpesvirus 2</taxon>
    </lineage>
</organism>
<feature type="signal peptide" evidence="1">
    <location>
        <begin position="1"/>
        <end position="26"/>
    </location>
</feature>
<feature type="chain" id="PRO_0000406579" description="Envelope glycoprotein N" evidence="1">
    <location>
        <begin position="27"/>
        <end position="95"/>
    </location>
</feature>
<feature type="topological domain" description="Virion surface" evidence="1">
    <location>
        <begin position="27"/>
        <end position="55"/>
    </location>
</feature>
<feature type="transmembrane region" description="Helical" evidence="1">
    <location>
        <begin position="56"/>
        <end position="76"/>
    </location>
</feature>
<feature type="topological domain" description="Intravirion" evidence="1">
    <location>
        <begin position="77"/>
        <end position="95"/>
    </location>
</feature>
<feature type="disulfide bond" description="Interchain (with gM)" evidence="1">
    <location>
        <position position="46"/>
    </location>
</feature>
<name>GN_GAHVM</name>
<gene>
    <name evidence="1" type="primary">gN</name>
    <name type="synonym">MDV064</name>
</gene>
<evidence type="ECO:0000255" key="1">
    <source>
        <dbReference type="HAMAP-Rule" id="MF_04037"/>
    </source>
</evidence>
<protein>
    <recommendedName>
        <fullName evidence="1">Envelope glycoprotein N</fullName>
    </recommendedName>
</protein>
<dbReference type="EMBL" id="AF243438">
    <property type="protein sequence ID" value="AAG14244.1"/>
    <property type="molecule type" value="Genomic_DNA"/>
</dbReference>
<dbReference type="RefSeq" id="YP_001033979.1">
    <property type="nucleotide sequence ID" value="NC_002229.3"/>
</dbReference>
<dbReference type="GeneID" id="4811524"/>
<dbReference type="KEGG" id="vg:4811524"/>
<dbReference type="Proteomes" id="UP000008072">
    <property type="component" value="Segment"/>
</dbReference>
<dbReference type="GO" id="GO:0044177">
    <property type="term" value="C:host cell Golgi apparatus"/>
    <property type="evidence" value="ECO:0007669"/>
    <property type="project" value="UniProtKB-SubCell"/>
</dbReference>
<dbReference type="GO" id="GO:0033644">
    <property type="term" value="C:host cell membrane"/>
    <property type="evidence" value="ECO:0007669"/>
    <property type="project" value="UniProtKB-SubCell"/>
</dbReference>
<dbReference type="GO" id="GO:0016020">
    <property type="term" value="C:membrane"/>
    <property type="evidence" value="ECO:0007669"/>
    <property type="project" value="UniProtKB-KW"/>
</dbReference>
<dbReference type="GO" id="GO:0019031">
    <property type="term" value="C:viral envelope"/>
    <property type="evidence" value="ECO:0007669"/>
    <property type="project" value="UniProtKB-KW"/>
</dbReference>
<dbReference type="GO" id="GO:0055036">
    <property type="term" value="C:virion membrane"/>
    <property type="evidence" value="ECO:0007669"/>
    <property type="project" value="UniProtKB-SubCell"/>
</dbReference>
<dbReference type="HAMAP" id="MF_04037">
    <property type="entry name" value="HSV_GN"/>
    <property type="match status" value="1"/>
</dbReference>
<dbReference type="InterPro" id="IPR008647">
    <property type="entry name" value="GN_domain"/>
</dbReference>
<dbReference type="InterPro" id="IPR034707">
    <property type="entry name" value="HSV_GN"/>
</dbReference>
<dbReference type="Pfam" id="PF05702">
    <property type="entry name" value="Herpes_UL49_5"/>
    <property type="match status" value="1"/>
</dbReference>
<reference key="1">
    <citation type="journal article" date="2000" name="J. Virol.">
        <title>The genome of a very virulent Marek's disease virus.</title>
        <authorList>
            <person name="Tulman E.R."/>
            <person name="Afonso C.L."/>
            <person name="Lu Z."/>
            <person name="Zsak L."/>
            <person name="Rock D.L."/>
            <person name="Kutish G.F."/>
        </authorList>
    </citation>
    <scope>NUCLEOTIDE SEQUENCE [LARGE SCALE GENOMIC DNA]</scope>
</reference>